<sequence length="209" mass="22396">MTQARTKKNPPLRVGVGGPVGSGKTTLLEMLCKAMRDRYDLVAITNDIYTKEDQRLLTISGALPAERIMGVETGGCPHTAIREDASINLEAVERMLAKFPDADVVFIESGGDNLAATFSPELSDLTIYVIDVAGGEKIPRKGGPGITKSDLLVINKTDLAPYVGASLEVMESDARKMRGGRPFVMGSVKSGQGLDEVIRFIEQQGMLGV</sequence>
<organism>
    <name type="scientific">Cupriavidus pinatubonensis (strain JMP 134 / LMG 1197)</name>
    <name type="common">Cupriavidus necator (strain JMP 134)</name>
    <dbReference type="NCBI Taxonomy" id="264198"/>
    <lineage>
        <taxon>Bacteria</taxon>
        <taxon>Pseudomonadati</taxon>
        <taxon>Pseudomonadota</taxon>
        <taxon>Betaproteobacteria</taxon>
        <taxon>Burkholderiales</taxon>
        <taxon>Burkholderiaceae</taxon>
        <taxon>Cupriavidus</taxon>
    </lineage>
</organism>
<dbReference type="EMBL" id="CP000090">
    <property type="protein sequence ID" value="AAZ60377.1"/>
    <property type="molecule type" value="Genomic_DNA"/>
</dbReference>
<dbReference type="SMR" id="Q473Q6"/>
<dbReference type="STRING" id="264198.Reut_A0998"/>
<dbReference type="KEGG" id="reu:Reut_A0998"/>
<dbReference type="eggNOG" id="COG0378">
    <property type="taxonomic scope" value="Bacteria"/>
</dbReference>
<dbReference type="HOGENOM" id="CLU_072144_1_0_4"/>
<dbReference type="OrthoDB" id="9802035at2"/>
<dbReference type="GO" id="GO:0005737">
    <property type="term" value="C:cytoplasm"/>
    <property type="evidence" value="ECO:0007669"/>
    <property type="project" value="UniProtKB-SubCell"/>
</dbReference>
<dbReference type="GO" id="GO:0005525">
    <property type="term" value="F:GTP binding"/>
    <property type="evidence" value="ECO:0007669"/>
    <property type="project" value="UniProtKB-KW"/>
</dbReference>
<dbReference type="GO" id="GO:0003924">
    <property type="term" value="F:GTPase activity"/>
    <property type="evidence" value="ECO:0007669"/>
    <property type="project" value="InterPro"/>
</dbReference>
<dbReference type="GO" id="GO:0016151">
    <property type="term" value="F:nickel cation binding"/>
    <property type="evidence" value="ECO:0007669"/>
    <property type="project" value="UniProtKB-UniRule"/>
</dbReference>
<dbReference type="GO" id="GO:0043419">
    <property type="term" value="P:urea catabolic process"/>
    <property type="evidence" value="ECO:0007669"/>
    <property type="project" value="InterPro"/>
</dbReference>
<dbReference type="CDD" id="cd05540">
    <property type="entry name" value="UreG"/>
    <property type="match status" value="1"/>
</dbReference>
<dbReference type="FunFam" id="3.40.50.300:FF:000208">
    <property type="entry name" value="Urease accessory protein UreG"/>
    <property type="match status" value="1"/>
</dbReference>
<dbReference type="Gene3D" id="3.40.50.300">
    <property type="entry name" value="P-loop containing nucleotide triphosphate hydrolases"/>
    <property type="match status" value="1"/>
</dbReference>
<dbReference type="HAMAP" id="MF_01389">
    <property type="entry name" value="UreG"/>
    <property type="match status" value="1"/>
</dbReference>
<dbReference type="InterPro" id="IPR003495">
    <property type="entry name" value="CobW/HypB/UreG_nucleotide-bd"/>
</dbReference>
<dbReference type="InterPro" id="IPR027417">
    <property type="entry name" value="P-loop_NTPase"/>
</dbReference>
<dbReference type="InterPro" id="IPR004400">
    <property type="entry name" value="UreG"/>
</dbReference>
<dbReference type="NCBIfam" id="TIGR00101">
    <property type="entry name" value="ureG"/>
    <property type="match status" value="1"/>
</dbReference>
<dbReference type="PANTHER" id="PTHR31715">
    <property type="entry name" value="UREASE ACCESSORY PROTEIN G"/>
    <property type="match status" value="1"/>
</dbReference>
<dbReference type="PANTHER" id="PTHR31715:SF0">
    <property type="entry name" value="UREASE ACCESSORY PROTEIN G"/>
    <property type="match status" value="1"/>
</dbReference>
<dbReference type="Pfam" id="PF02492">
    <property type="entry name" value="cobW"/>
    <property type="match status" value="1"/>
</dbReference>
<dbReference type="PIRSF" id="PIRSF005624">
    <property type="entry name" value="Ni-bind_GTPase"/>
    <property type="match status" value="1"/>
</dbReference>
<dbReference type="SUPFAM" id="SSF52540">
    <property type="entry name" value="P-loop containing nucleoside triphosphate hydrolases"/>
    <property type="match status" value="1"/>
</dbReference>
<proteinExistence type="inferred from homology"/>
<name>UREG_CUPPJ</name>
<accession>Q473Q6</accession>
<reference key="1">
    <citation type="journal article" date="2010" name="PLoS ONE">
        <title>The complete multipartite genome sequence of Cupriavidus necator JMP134, a versatile pollutant degrader.</title>
        <authorList>
            <person name="Lykidis A."/>
            <person name="Perez-Pantoja D."/>
            <person name="Ledger T."/>
            <person name="Mavromatis K."/>
            <person name="Anderson I.J."/>
            <person name="Ivanova N.N."/>
            <person name="Hooper S.D."/>
            <person name="Lapidus A."/>
            <person name="Lucas S."/>
            <person name="Gonzalez B."/>
            <person name="Kyrpides N.C."/>
        </authorList>
    </citation>
    <scope>NUCLEOTIDE SEQUENCE [LARGE SCALE GENOMIC DNA]</scope>
    <source>
        <strain>JMP134 / LMG 1197</strain>
    </source>
</reference>
<evidence type="ECO:0000255" key="1">
    <source>
        <dbReference type="HAMAP-Rule" id="MF_01389"/>
    </source>
</evidence>
<feature type="chain" id="PRO_0000347433" description="Urease accessory protein UreG">
    <location>
        <begin position="1"/>
        <end position="209"/>
    </location>
</feature>
<feature type="binding site" evidence="1">
    <location>
        <begin position="18"/>
        <end position="25"/>
    </location>
    <ligand>
        <name>GTP</name>
        <dbReference type="ChEBI" id="CHEBI:37565"/>
    </ligand>
</feature>
<gene>
    <name evidence="1" type="primary">ureG</name>
    <name type="ordered locus">Reut_A0998</name>
</gene>
<protein>
    <recommendedName>
        <fullName evidence="1">Urease accessory protein UreG</fullName>
    </recommendedName>
</protein>
<keyword id="KW-0143">Chaperone</keyword>
<keyword id="KW-0963">Cytoplasm</keyword>
<keyword id="KW-0342">GTP-binding</keyword>
<keyword id="KW-0996">Nickel insertion</keyword>
<keyword id="KW-0547">Nucleotide-binding</keyword>
<comment type="function">
    <text evidence="1">Facilitates the functional incorporation of the urease nickel metallocenter. This process requires GTP hydrolysis, probably effectuated by UreG.</text>
</comment>
<comment type="subunit">
    <text evidence="1">Homodimer. UreD, UreF and UreG form a complex that acts as a GTP-hydrolysis-dependent molecular chaperone, activating the urease apoprotein by helping to assemble the nickel containing metallocenter of UreC. The UreE protein probably delivers the nickel.</text>
</comment>
<comment type="subcellular location">
    <subcellularLocation>
        <location evidence="1">Cytoplasm</location>
    </subcellularLocation>
</comment>
<comment type="similarity">
    <text evidence="1">Belongs to the SIMIBI class G3E GTPase family. UreG subfamily.</text>
</comment>